<accession>Q3JW82</accession>
<dbReference type="EC" id="3.2.2.23" evidence="2"/>
<dbReference type="EC" id="4.2.99.18" evidence="2"/>
<dbReference type="EMBL" id="CP000124">
    <property type="protein sequence ID" value="ABA49059.1"/>
    <property type="molecule type" value="Genomic_DNA"/>
</dbReference>
<dbReference type="RefSeq" id="WP_004522858.1">
    <property type="nucleotide sequence ID" value="NC_007434.1"/>
</dbReference>
<dbReference type="SMR" id="Q3JW82"/>
<dbReference type="EnsemblBacteria" id="ABA49059">
    <property type="protein sequence ID" value="ABA49059"/>
    <property type="gene ID" value="BURPS1710b_0758"/>
</dbReference>
<dbReference type="GeneID" id="93059047"/>
<dbReference type="KEGG" id="bpm:BURPS1710b_0758"/>
<dbReference type="HOGENOM" id="CLU_038423_1_1_4"/>
<dbReference type="Proteomes" id="UP000002700">
    <property type="component" value="Chromosome I"/>
</dbReference>
<dbReference type="GO" id="GO:0034039">
    <property type="term" value="F:8-oxo-7,8-dihydroguanine DNA N-glycosylase activity"/>
    <property type="evidence" value="ECO:0007669"/>
    <property type="project" value="TreeGrafter"/>
</dbReference>
<dbReference type="GO" id="GO:0140078">
    <property type="term" value="F:class I DNA-(apurinic or apyrimidinic site) endonuclease activity"/>
    <property type="evidence" value="ECO:0007669"/>
    <property type="project" value="UniProtKB-EC"/>
</dbReference>
<dbReference type="GO" id="GO:0003684">
    <property type="term" value="F:damaged DNA binding"/>
    <property type="evidence" value="ECO:0007669"/>
    <property type="project" value="InterPro"/>
</dbReference>
<dbReference type="GO" id="GO:0008270">
    <property type="term" value="F:zinc ion binding"/>
    <property type="evidence" value="ECO:0007669"/>
    <property type="project" value="UniProtKB-UniRule"/>
</dbReference>
<dbReference type="GO" id="GO:0006284">
    <property type="term" value="P:base-excision repair"/>
    <property type="evidence" value="ECO:0007669"/>
    <property type="project" value="InterPro"/>
</dbReference>
<dbReference type="CDD" id="cd08966">
    <property type="entry name" value="EcFpg-like_N"/>
    <property type="match status" value="1"/>
</dbReference>
<dbReference type="FunFam" id="1.10.8.50:FF:000003">
    <property type="entry name" value="Formamidopyrimidine-DNA glycosylase"/>
    <property type="match status" value="1"/>
</dbReference>
<dbReference type="FunFam" id="3.20.190.10:FF:000001">
    <property type="entry name" value="Formamidopyrimidine-DNA glycosylase"/>
    <property type="match status" value="1"/>
</dbReference>
<dbReference type="Gene3D" id="1.10.8.50">
    <property type="match status" value="1"/>
</dbReference>
<dbReference type="Gene3D" id="3.20.190.10">
    <property type="entry name" value="MutM-like, N-terminal"/>
    <property type="match status" value="1"/>
</dbReference>
<dbReference type="HAMAP" id="MF_00103">
    <property type="entry name" value="Fapy_DNA_glycosyl"/>
    <property type="match status" value="1"/>
</dbReference>
<dbReference type="InterPro" id="IPR015886">
    <property type="entry name" value="DNA_glyclase/AP_lyase_DNA-bd"/>
</dbReference>
<dbReference type="InterPro" id="IPR015887">
    <property type="entry name" value="DNA_glyclase_Znf_dom_DNA_BS"/>
</dbReference>
<dbReference type="InterPro" id="IPR020629">
    <property type="entry name" value="Formamido-pyr_DNA_Glyclase"/>
</dbReference>
<dbReference type="InterPro" id="IPR012319">
    <property type="entry name" value="FPG_cat"/>
</dbReference>
<dbReference type="InterPro" id="IPR035937">
    <property type="entry name" value="MutM-like_N-ter"/>
</dbReference>
<dbReference type="InterPro" id="IPR010979">
    <property type="entry name" value="Ribosomal_uS13-like_H2TH"/>
</dbReference>
<dbReference type="InterPro" id="IPR000214">
    <property type="entry name" value="Znf_DNA_glyclase/AP_lyase"/>
</dbReference>
<dbReference type="InterPro" id="IPR010663">
    <property type="entry name" value="Znf_FPG/IleRS"/>
</dbReference>
<dbReference type="NCBIfam" id="TIGR00577">
    <property type="entry name" value="fpg"/>
    <property type="match status" value="1"/>
</dbReference>
<dbReference type="NCBIfam" id="NF002211">
    <property type="entry name" value="PRK01103.1"/>
    <property type="match status" value="1"/>
</dbReference>
<dbReference type="PANTHER" id="PTHR22993">
    <property type="entry name" value="FORMAMIDOPYRIMIDINE-DNA GLYCOSYLASE"/>
    <property type="match status" value="1"/>
</dbReference>
<dbReference type="PANTHER" id="PTHR22993:SF9">
    <property type="entry name" value="FORMAMIDOPYRIMIDINE-DNA GLYCOSYLASE"/>
    <property type="match status" value="1"/>
</dbReference>
<dbReference type="Pfam" id="PF01149">
    <property type="entry name" value="Fapy_DNA_glyco"/>
    <property type="match status" value="1"/>
</dbReference>
<dbReference type="Pfam" id="PF06831">
    <property type="entry name" value="H2TH"/>
    <property type="match status" value="1"/>
</dbReference>
<dbReference type="Pfam" id="PF06827">
    <property type="entry name" value="zf-FPG_IleRS"/>
    <property type="match status" value="1"/>
</dbReference>
<dbReference type="SMART" id="SM00898">
    <property type="entry name" value="Fapy_DNA_glyco"/>
    <property type="match status" value="1"/>
</dbReference>
<dbReference type="SMART" id="SM01232">
    <property type="entry name" value="H2TH"/>
    <property type="match status" value="1"/>
</dbReference>
<dbReference type="SUPFAM" id="SSF57716">
    <property type="entry name" value="Glucocorticoid receptor-like (DNA-binding domain)"/>
    <property type="match status" value="1"/>
</dbReference>
<dbReference type="SUPFAM" id="SSF81624">
    <property type="entry name" value="N-terminal domain of MutM-like DNA repair proteins"/>
    <property type="match status" value="1"/>
</dbReference>
<dbReference type="SUPFAM" id="SSF46946">
    <property type="entry name" value="S13-like H2TH domain"/>
    <property type="match status" value="1"/>
</dbReference>
<dbReference type="PROSITE" id="PS51068">
    <property type="entry name" value="FPG_CAT"/>
    <property type="match status" value="1"/>
</dbReference>
<dbReference type="PROSITE" id="PS01242">
    <property type="entry name" value="ZF_FPG_1"/>
    <property type="match status" value="1"/>
</dbReference>
<dbReference type="PROSITE" id="PS51066">
    <property type="entry name" value="ZF_FPG_2"/>
    <property type="match status" value="1"/>
</dbReference>
<feature type="initiator methionine" description="Removed" evidence="1">
    <location>
        <position position="1"/>
    </location>
</feature>
<feature type="chain" id="PRO_0000228423" description="Formamidopyrimidine-DNA glycosylase">
    <location>
        <begin position="2"/>
        <end position="276"/>
    </location>
</feature>
<feature type="zinc finger region" description="FPG-type" evidence="2">
    <location>
        <begin position="242"/>
        <end position="276"/>
    </location>
</feature>
<feature type="active site" description="Schiff-base intermediate with DNA" evidence="2">
    <location>
        <position position="2"/>
    </location>
</feature>
<feature type="active site" description="Proton donor" evidence="2">
    <location>
        <position position="3"/>
    </location>
</feature>
<feature type="active site" description="Proton donor; for beta-elimination activity" evidence="2">
    <location>
        <position position="58"/>
    </location>
</feature>
<feature type="active site" description="Proton donor; for delta-elimination activity" evidence="2">
    <location>
        <position position="266"/>
    </location>
</feature>
<feature type="binding site" evidence="2">
    <location>
        <position position="94"/>
    </location>
    <ligand>
        <name>DNA</name>
        <dbReference type="ChEBI" id="CHEBI:16991"/>
    </ligand>
</feature>
<feature type="binding site" evidence="2">
    <location>
        <position position="112"/>
    </location>
    <ligand>
        <name>DNA</name>
        <dbReference type="ChEBI" id="CHEBI:16991"/>
    </ligand>
</feature>
<feature type="binding site" evidence="2">
    <location>
        <position position="157"/>
    </location>
    <ligand>
        <name>DNA</name>
        <dbReference type="ChEBI" id="CHEBI:16991"/>
    </ligand>
</feature>
<gene>
    <name evidence="2" type="primary">mutM</name>
    <name evidence="2" type="synonym">fpg</name>
    <name type="ordered locus">BURPS1710b_0758</name>
</gene>
<sequence>MPELPEVEVTRRGIEPFVAGRRVERVDVRTAMLRWPVPAGFAEMLRSREVLRVERRGKYLLFEVDAGWFIVHLGMTGTLRVLPNDAPPPAPAKHDHVDWIFDEFVLRFRDPRRFGAVLWHPRDAGDVHAHPLLASLGVEPFSAAFSGALLFGRTRGRTVSVKQALLAGDIVVGVGNIYASESLFRAGIRPTTAAGRVSLPRYERLADAVRATLADAIERGGSTLRDFVGSNGESGYFQLDCFVYDRAGEPCRVCGAPIRQIVQGQRSTYFCPNCQR</sequence>
<keyword id="KW-0227">DNA damage</keyword>
<keyword id="KW-0234">DNA repair</keyword>
<keyword id="KW-0238">DNA-binding</keyword>
<keyword id="KW-0326">Glycosidase</keyword>
<keyword id="KW-0378">Hydrolase</keyword>
<keyword id="KW-0456">Lyase</keyword>
<keyword id="KW-0479">Metal-binding</keyword>
<keyword id="KW-0511">Multifunctional enzyme</keyword>
<keyword id="KW-0862">Zinc</keyword>
<keyword id="KW-0863">Zinc-finger</keyword>
<comment type="function">
    <text evidence="2">Involved in base excision repair of DNA damaged by oxidation or by mutagenic agents. Acts as a DNA glycosylase that recognizes and removes damaged bases. Has a preference for oxidized purines, such as 7,8-dihydro-8-oxoguanine (8-oxoG). Has AP (apurinic/apyrimidinic) lyase activity and introduces nicks in the DNA strand. Cleaves the DNA backbone by beta-delta elimination to generate a single-strand break at the site of the removed base with both 3'- and 5'-phosphates.</text>
</comment>
<comment type="catalytic activity">
    <reaction evidence="2">
        <text>Hydrolysis of DNA containing ring-opened 7-methylguanine residues, releasing 2,6-diamino-4-hydroxy-5-(N-methyl)formamidopyrimidine.</text>
        <dbReference type="EC" id="3.2.2.23"/>
    </reaction>
</comment>
<comment type="catalytic activity">
    <reaction evidence="2">
        <text>2'-deoxyribonucleotide-(2'-deoxyribose 5'-phosphate)-2'-deoxyribonucleotide-DNA = a 3'-end 2'-deoxyribonucleotide-(2,3-dehydro-2,3-deoxyribose 5'-phosphate)-DNA + a 5'-end 5'-phospho-2'-deoxyribonucleoside-DNA + H(+)</text>
        <dbReference type="Rhea" id="RHEA:66592"/>
        <dbReference type="Rhea" id="RHEA-COMP:13180"/>
        <dbReference type="Rhea" id="RHEA-COMP:16897"/>
        <dbReference type="Rhea" id="RHEA-COMP:17067"/>
        <dbReference type="ChEBI" id="CHEBI:15378"/>
        <dbReference type="ChEBI" id="CHEBI:136412"/>
        <dbReference type="ChEBI" id="CHEBI:157695"/>
        <dbReference type="ChEBI" id="CHEBI:167181"/>
        <dbReference type="EC" id="4.2.99.18"/>
    </reaction>
</comment>
<comment type="cofactor">
    <cofactor evidence="2">
        <name>Zn(2+)</name>
        <dbReference type="ChEBI" id="CHEBI:29105"/>
    </cofactor>
    <text evidence="2">Binds 1 zinc ion per subunit.</text>
</comment>
<comment type="subunit">
    <text evidence="2">Monomer.</text>
</comment>
<comment type="similarity">
    <text evidence="2">Belongs to the FPG family.</text>
</comment>
<name>FPG_BURP1</name>
<reference key="1">
    <citation type="journal article" date="2010" name="Genome Biol. Evol.">
        <title>Continuing evolution of Burkholderia mallei through genome reduction and large-scale rearrangements.</title>
        <authorList>
            <person name="Losada L."/>
            <person name="Ronning C.M."/>
            <person name="DeShazer D."/>
            <person name="Woods D."/>
            <person name="Fedorova N."/>
            <person name="Kim H.S."/>
            <person name="Shabalina S.A."/>
            <person name="Pearson T.R."/>
            <person name="Brinkac L."/>
            <person name="Tan P."/>
            <person name="Nandi T."/>
            <person name="Crabtree J."/>
            <person name="Badger J."/>
            <person name="Beckstrom-Sternberg S."/>
            <person name="Saqib M."/>
            <person name="Schutzer S.E."/>
            <person name="Keim P."/>
            <person name="Nierman W.C."/>
        </authorList>
    </citation>
    <scope>NUCLEOTIDE SEQUENCE [LARGE SCALE GENOMIC DNA]</scope>
    <source>
        <strain>1710b</strain>
    </source>
</reference>
<proteinExistence type="inferred from homology"/>
<organism>
    <name type="scientific">Burkholderia pseudomallei (strain 1710b)</name>
    <dbReference type="NCBI Taxonomy" id="320372"/>
    <lineage>
        <taxon>Bacteria</taxon>
        <taxon>Pseudomonadati</taxon>
        <taxon>Pseudomonadota</taxon>
        <taxon>Betaproteobacteria</taxon>
        <taxon>Burkholderiales</taxon>
        <taxon>Burkholderiaceae</taxon>
        <taxon>Burkholderia</taxon>
        <taxon>pseudomallei group</taxon>
    </lineage>
</organism>
<evidence type="ECO:0000250" key="1"/>
<evidence type="ECO:0000255" key="2">
    <source>
        <dbReference type="HAMAP-Rule" id="MF_00103"/>
    </source>
</evidence>
<protein>
    <recommendedName>
        <fullName evidence="2">Formamidopyrimidine-DNA glycosylase</fullName>
        <shortName evidence="2">Fapy-DNA glycosylase</shortName>
        <ecNumber evidence="2">3.2.2.23</ecNumber>
    </recommendedName>
    <alternativeName>
        <fullName evidence="2">DNA-(apurinic or apyrimidinic site) lyase MutM</fullName>
        <shortName evidence="2">AP lyase MutM</shortName>
        <ecNumber evidence="2">4.2.99.18</ecNumber>
    </alternativeName>
</protein>